<accession>B2JKT6</accession>
<keyword id="KW-0963">Cytoplasm</keyword>
<keyword id="KW-1185">Reference proteome</keyword>
<keyword id="KW-0690">Ribosome biogenesis</keyword>
<organism>
    <name type="scientific">Paraburkholderia phymatum (strain DSM 17167 / CIP 108236 / LMG 21445 / STM815)</name>
    <name type="common">Burkholderia phymatum</name>
    <dbReference type="NCBI Taxonomy" id="391038"/>
    <lineage>
        <taxon>Bacteria</taxon>
        <taxon>Pseudomonadati</taxon>
        <taxon>Pseudomonadota</taxon>
        <taxon>Betaproteobacteria</taxon>
        <taxon>Burkholderiales</taxon>
        <taxon>Burkholderiaceae</taxon>
        <taxon>Paraburkholderia</taxon>
    </lineage>
</organism>
<name>RIMP_PARP8</name>
<gene>
    <name evidence="1" type="primary">rimP</name>
    <name type="ordered locus">Bphy_1731</name>
</gene>
<evidence type="ECO:0000255" key="1">
    <source>
        <dbReference type="HAMAP-Rule" id="MF_01077"/>
    </source>
</evidence>
<reference key="1">
    <citation type="journal article" date="2014" name="Stand. Genomic Sci.">
        <title>Complete genome sequence of Burkholderia phymatum STM815(T), a broad host range and efficient nitrogen-fixing symbiont of Mimosa species.</title>
        <authorList>
            <person name="Moulin L."/>
            <person name="Klonowska A."/>
            <person name="Caroline B."/>
            <person name="Booth K."/>
            <person name="Vriezen J.A."/>
            <person name="Melkonian R."/>
            <person name="James E.K."/>
            <person name="Young J.P."/>
            <person name="Bena G."/>
            <person name="Hauser L."/>
            <person name="Land M."/>
            <person name="Kyrpides N."/>
            <person name="Bruce D."/>
            <person name="Chain P."/>
            <person name="Copeland A."/>
            <person name="Pitluck S."/>
            <person name="Woyke T."/>
            <person name="Lizotte-Waniewski M."/>
            <person name="Bristow J."/>
            <person name="Riley M."/>
        </authorList>
    </citation>
    <scope>NUCLEOTIDE SEQUENCE [LARGE SCALE GENOMIC DNA]</scope>
    <source>
        <strain>DSM 17167 / CIP 108236 / LMG 21445 / STM815</strain>
    </source>
</reference>
<protein>
    <recommendedName>
        <fullName evidence="1">Ribosome maturation factor RimP</fullName>
    </recommendedName>
</protein>
<proteinExistence type="inferred from homology"/>
<comment type="function">
    <text evidence="1">Required for maturation of 30S ribosomal subunits.</text>
</comment>
<comment type="subcellular location">
    <subcellularLocation>
        <location evidence="1">Cytoplasm</location>
    </subcellularLocation>
</comment>
<comment type="similarity">
    <text evidence="1">Belongs to the RimP family.</text>
</comment>
<sequence>MQLTELIETTVVGLGYELVDLERTGRGMLCIYIDQPAGIAIEDCEKVTRQLQHVLTVENIDYERLEVSSPGLDRPLKKLADFERFAGSEAVITLKKPLDGRKSYRGILHAPEGETIGLEFEGKEGAAMLDFTLADIDKARLVPKVDFRSRKQ</sequence>
<feature type="chain" id="PRO_1000136742" description="Ribosome maturation factor RimP">
    <location>
        <begin position="1"/>
        <end position="152"/>
    </location>
</feature>
<dbReference type="EMBL" id="CP001043">
    <property type="protein sequence ID" value="ACC70913.1"/>
    <property type="molecule type" value="Genomic_DNA"/>
</dbReference>
<dbReference type="RefSeq" id="WP_012401123.1">
    <property type="nucleotide sequence ID" value="NZ_CADFGH010000004.1"/>
</dbReference>
<dbReference type="SMR" id="B2JKT6"/>
<dbReference type="STRING" id="391038.Bphy_1731"/>
<dbReference type="KEGG" id="bph:Bphy_1731"/>
<dbReference type="eggNOG" id="COG0779">
    <property type="taxonomic scope" value="Bacteria"/>
</dbReference>
<dbReference type="HOGENOM" id="CLU_070525_1_0_4"/>
<dbReference type="OrthoDB" id="9805006at2"/>
<dbReference type="Proteomes" id="UP000001192">
    <property type="component" value="Chromosome 1"/>
</dbReference>
<dbReference type="GO" id="GO:0005829">
    <property type="term" value="C:cytosol"/>
    <property type="evidence" value="ECO:0007669"/>
    <property type="project" value="TreeGrafter"/>
</dbReference>
<dbReference type="GO" id="GO:0000028">
    <property type="term" value="P:ribosomal small subunit assembly"/>
    <property type="evidence" value="ECO:0007669"/>
    <property type="project" value="TreeGrafter"/>
</dbReference>
<dbReference type="GO" id="GO:0006412">
    <property type="term" value="P:translation"/>
    <property type="evidence" value="ECO:0007669"/>
    <property type="project" value="TreeGrafter"/>
</dbReference>
<dbReference type="CDD" id="cd01734">
    <property type="entry name" value="YlxS_C"/>
    <property type="match status" value="1"/>
</dbReference>
<dbReference type="Gene3D" id="2.30.30.180">
    <property type="entry name" value="Ribosome maturation factor RimP, C-terminal domain"/>
    <property type="match status" value="1"/>
</dbReference>
<dbReference type="Gene3D" id="3.30.300.70">
    <property type="entry name" value="RimP-like superfamily, N-terminal"/>
    <property type="match status" value="1"/>
</dbReference>
<dbReference type="HAMAP" id="MF_01077">
    <property type="entry name" value="RimP"/>
    <property type="match status" value="1"/>
</dbReference>
<dbReference type="InterPro" id="IPR003728">
    <property type="entry name" value="Ribosome_maturation_RimP"/>
</dbReference>
<dbReference type="InterPro" id="IPR028998">
    <property type="entry name" value="RimP_C"/>
</dbReference>
<dbReference type="InterPro" id="IPR036847">
    <property type="entry name" value="RimP_C_sf"/>
</dbReference>
<dbReference type="InterPro" id="IPR028989">
    <property type="entry name" value="RimP_N"/>
</dbReference>
<dbReference type="InterPro" id="IPR035956">
    <property type="entry name" value="RimP_N_sf"/>
</dbReference>
<dbReference type="NCBIfam" id="NF000929">
    <property type="entry name" value="PRK00092.2-1"/>
    <property type="match status" value="1"/>
</dbReference>
<dbReference type="PANTHER" id="PTHR33867">
    <property type="entry name" value="RIBOSOME MATURATION FACTOR RIMP"/>
    <property type="match status" value="1"/>
</dbReference>
<dbReference type="PANTHER" id="PTHR33867:SF1">
    <property type="entry name" value="RIBOSOME MATURATION FACTOR RIMP"/>
    <property type="match status" value="1"/>
</dbReference>
<dbReference type="Pfam" id="PF17384">
    <property type="entry name" value="DUF150_C"/>
    <property type="match status" value="1"/>
</dbReference>
<dbReference type="Pfam" id="PF02576">
    <property type="entry name" value="RimP_N"/>
    <property type="match status" value="1"/>
</dbReference>
<dbReference type="SUPFAM" id="SSF74942">
    <property type="entry name" value="YhbC-like, C-terminal domain"/>
    <property type="match status" value="1"/>
</dbReference>
<dbReference type="SUPFAM" id="SSF75420">
    <property type="entry name" value="YhbC-like, N-terminal domain"/>
    <property type="match status" value="1"/>
</dbReference>